<accession>P48516</accession>
<evidence type="ECO:0000255" key="1">
    <source>
        <dbReference type="HAMAP-Rule" id="MF_00080"/>
    </source>
</evidence>
<evidence type="ECO:0000256" key="2">
    <source>
        <dbReference type="SAM" id="MobiDB-lite"/>
    </source>
</evidence>
<evidence type="ECO:0000269" key="3">
    <source>
    </source>
</evidence>
<proteinExistence type="evidence at protein level"/>
<sequence length="247" mass="27145">MIREQRSSRGGSRDQRTNRRIRAREVRVVGSDGSQLGVMPLEAALDRARTEGLDLVEISPMASPPVCKIMDYGKFKYEEKKKASEAKRAQVTVLLKEVKLRPKTEEHDYEFKVRNTRRFIEDGNKAKVVIQFRGREITHREQGTAILDDVAKDLKDVAVVEQMPRMEGRLMFMILAPTPKVAQKARELVRQAATAAKRPPPPGAPGAGKSAAGASSGAEEKAEETAEEKKEAQAAPAAAEAQSPTAS</sequence>
<reference key="1">
    <citation type="journal article" date="1994" name="J. Bacteriol.">
        <title>The dsg gene of Myxococcus xanthus encodes a protein similar to translation initiation factor IF3.</title>
        <authorList>
            <person name="Cheng Y.L."/>
            <person name="Kalman L.V."/>
            <person name="Kaiser D."/>
        </authorList>
    </citation>
    <scope>NUCLEOTIDE SEQUENCE [GENOMIC DNA]</scope>
    <scope>PROTEIN SEQUENCE OF 2-7</scope>
    <source>
        <strain>DK101</strain>
    </source>
</reference>
<reference key="2">
    <citation type="journal article" date="1994" name="J. Bacteriol.">
        <title>The Myxococcus xanthus dsg gene product performs functions of translation initiation factor IF3 in vivo.</title>
        <authorList>
            <person name="Kalman L.V."/>
            <person name="Cheng Y.L."/>
            <person name="Kaiser D."/>
        </authorList>
    </citation>
    <scope>CHARACTERIZATION</scope>
</reference>
<reference key="3">
    <citation type="journal article" date="1989" name="J. Bacteriol.">
        <title>dsg, a gene required for cell-cell interaction early in Myxococcus development.</title>
        <authorList>
            <person name="Cheng Y.L."/>
            <person name="Kaiser D."/>
        </authorList>
    </citation>
    <scope>CHARACTERIZATION</scope>
    <source>
        <strain>DK101</strain>
    </source>
</reference>
<organism>
    <name type="scientific">Myxococcus xanthus</name>
    <dbReference type="NCBI Taxonomy" id="34"/>
    <lineage>
        <taxon>Bacteria</taxon>
        <taxon>Pseudomonadati</taxon>
        <taxon>Myxococcota</taxon>
        <taxon>Myxococcia</taxon>
        <taxon>Myxococcales</taxon>
        <taxon>Cystobacterineae</taxon>
        <taxon>Myxococcaceae</taxon>
        <taxon>Myxococcus</taxon>
    </lineage>
</organism>
<comment type="function">
    <text>IF-3 binds to the 30S ribosomal subunit and shifts the equilibrium between 70S ribosomes and their 50S and 30S subunits in favor of the free subunits, thus enhancing the availability of 30S subunits on which protein synthesis initiation begins.</text>
</comment>
<comment type="subunit">
    <text evidence="1">Monomer.</text>
</comment>
<comment type="subcellular location">
    <subcellularLocation>
        <location evidence="1">Cytoplasm</location>
    </subcellularLocation>
</comment>
<comment type="domain">
    <text>The 66 residues C-terminal tail is not present in other species.</text>
</comment>
<comment type="similarity">
    <text evidence="1">Belongs to the IF-3 family.</text>
</comment>
<protein>
    <recommendedName>
        <fullName evidence="1">Translation initiation factor IF-3</fullName>
    </recommendedName>
</protein>
<gene>
    <name evidence="1" type="primary">infC</name>
    <name type="synonym">dsg</name>
</gene>
<dbReference type="EMBL" id="U04438">
    <property type="protein sequence ID" value="AAC13748.1"/>
    <property type="molecule type" value="Unassigned_DNA"/>
</dbReference>
<dbReference type="PIR" id="A53379">
    <property type="entry name" value="A53379"/>
</dbReference>
<dbReference type="RefSeq" id="WP_011550712.1">
    <property type="nucleotide sequence ID" value="NZ_JABFNQ010000049.1"/>
</dbReference>
<dbReference type="SMR" id="P48516"/>
<dbReference type="GeneID" id="41358060"/>
<dbReference type="OMA" id="KCTVIFR"/>
<dbReference type="GO" id="GO:0005829">
    <property type="term" value="C:cytosol"/>
    <property type="evidence" value="ECO:0007669"/>
    <property type="project" value="TreeGrafter"/>
</dbReference>
<dbReference type="GO" id="GO:0016020">
    <property type="term" value="C:membrane"/>
    <property type="evidence" value="ECO:0007669"/>
    <property type="project" value="TreeGrafter"/>
</dbReference>
<dbReference type="GO" id="GO:0043022">
    <property type="term" value="F:ribosome binding"/>
    <property type="evidence" value="ECO:0007669"/>
    <property type="project" value="TreeGrafter"/>
</dbReference>
<dbReference type="GO" id="GO:0003743">
    <property type="term" value="F:translation initiation factor activity"/>
    <property type="evidence" value="ECO:0007669"/>
    <property type="project" value="UniProtKB-UniRule"/>
</dbReference>
<dbReference type="GO" id="GO:0032790">
    <property type="term" value="P:ribosome disassembly"/>
    <property type="evidence" value="ECO:0007669"/>
    <property type="project" value="TreeGrafter"/>
</dbReference>
<dbReference type="FunFam" id="3.10.20.80:FF:000001">
    <property type="entry name" value="Translation initiation factor IF-3"/>
    <property type="match status" value="1"/>
</dbReference>
<dbReference type="FunFam" id="3.30.110.10:FF:000001">
    <property type="entry name" value="Translation initiation factor IF-3"/>
    <property type="match status" value="1"/>
</dbReference>
<dbReference type="Gene3D" id="3.30.110.10">
    <property type="entry name" value="Translation initiation factor 3 (IF-3), C-terminal domain"/>
    <property type="match status" value="1"/>
</dbReference>
<dbReference type="Gene3D" id="3.10.20.80">
    <property type="entry name" value="Translation initiation factor 3 (IF-3), N-terminal domain"/>
    <property type="match status" value="1"/>
</dbReference>
<dbReference type="HAMAP" id="MF_00080">
    <property type="entry name" value="IF_3"/>
    <property type="match status" value="1"/>
</dbReference>
<dbReference type="InterPro" id="IPR036788">
    <property type="entry name" value="T_IF-3_C_sf"/>
</dbReference>
<dbReference type="InterPro" id="IPR036787">
    <property type="entry name" value="T_IF-3_N_sf"/>
</dbReference>
<dbReference type="InterPro" id="IPR019813">
    <property type="entry name" value="Translation_initiation_fac3_CS"/>
</dbReference>
<dbReference type="InterPro" id="IPR001288">
    <property type="entry name" value="Translation_initiation_fac_3"/>
</dbReference>
<dbReference type="InterPro" id="IPR019815">
    <property type="entry name" value="Translation_initiation_fac_3_C"/>
</dbReference>
<dbReference type="InterPro" id="IPR019814">
    <property type="entry name" value="Translation_initiation_fac_3_N"/>
</dbReference>
<dbReference type="NCBIfam" id="TIGR00168">
    <property type="entry name" value="infC"/>
    <property type="match status" value="1"/>
</dbReference>
<dbReference type="PANTHER" id="PTHR10938">
    <property type="entry name" value="TRANSLATION INITIATION FACTOR IF-3"/>
    <property type="match status" value="1"/>
</dbReference>
<dbReference type="PANTHER" id="PTHR10938:SF0">
    <property type="entry name" value="TRANSLATION INITIATION FACTOR IF-3, MITOCHONDRIAL"/>
    <property type="match status" value="1"/>
</dbReference>
<dbReference type="Pfam" id="PF00707">
    <property type="entry name" value="IF3_C"/>
    <property type="match status" value="1"/>
</dbReference>
<dbReference type="Pfam" id="PF05198">
    <property type="entry name" value="IF3_N"/>
    <property type="match status" value="1"/>
</dbReference>
<dbReference type="SUPFAM" id="SSF55200">
    <property type="entry name" value="Translation initiation factor IF3, C-terminal domain"/>
    <property type="match status" value="1"/>
</dbReference>
<dbReference type="SUPFAM" id="SSF54364">
    <property type="entry name" value="Translation initiation factor IF3, N-terminal domain"/>
    <property type="match status" value="1"/>
</dbReference>
<dbReference type="PROSITE" id="PS00938">
    <property type="entry name" value="IF3"/>
    <property type="match status" value="1"/>
</dbReference>
<name>IF3_MYXXA</name>
<feature type="initiator methionine" description="Removed" evidence="3">
    <location>
        <position position="1"/>
    </location>
</feature>
<feature type="chain" id="PRO_0000177547" description="Translation initiation factor IF-3">
    <location>
        <begin position="2"/>
        <end position="247"/>
    </location>
</feature>
<feature type="region of interest" description="Disordered" evidence="2">
    <location>
        <begin position="1"/>
        <end position="20"/>
    </location>
</feature>
<feature type="region of interest" description="Needed for vegetative and developmental functions, but not for viability">
    <location>
        <begin position="182"/>
        <end position="247"/>
    </location>
</feature>
<feature type="region of interest" description="Disordered" evidence="2">
    <location>
        <begin position="188"/>
        <end position="247"/>
    </location>
</feature>
<feature type="compositionally biased region" description="Low complexity" evidence="2">
    <location>
        <begin position="207"/>
        <end position="217"/>
    </location>
</feature>
<feature type="compositionally biased region" description="Basic and acidic residues" evidence="2">
    <location>
        <begin position="218"/>
        <end position="232"/>
    </location>
</feature>
<feature type="compositionally biased region" description="Low complexity" evidence="2">
    <location>
        <begin position="233"/>
        <end position="247"/>
    </location>
</feature>
<feature type="sequence variant" description="In strain: DK429 and DK439; causes defects in fruiting body development and in sporulation.">
    <original>G</original>
    <variation>E</variation>
    <location>
        <position position="134"/>
    </location>
</feature>
<keyword id="KW-0963">Cytoplasm</keyword>
<keyword id="KW-0903">Direct protein sequencing</keyword>
<keyword id="KW-0396">Initiation factor</keyword>
<keyword id="KW-0648">Protein biosynthesis</keyword>